<evidence type="ECO:0000255" key="1">
    <source>
        <dbReference type="HAMAP-Rule" id="MF_01724"/>
    </source>
</evidence>
<proteinExistence type="inferred from homology"/>
<name>SSUB1_PSEU2</name>
<accession>Q4ZTG9</accession>
<protein>
    <recommendedName>
        <fullName evidence="1">Aliphatic sulfonates import ATP-binding protein SsuB 1</fullName>
        <ecNumber evidence="1">7.6.2.14</ecNumber>
    </recommendedName>
</protein>
<dbReference type="EC" id="7.6.2.14" evidence="1"/>
<dbReference type="EMBL" id="CP000075">
    <property type="protein sequence ID" value="AAY37553.1"/>
    <property type="molecule type" value="Genomic_DNA"/>
</dbReference>
<dbReference type="RefSeq" id="WP_011267736.1">
    <property type="nucleotide sequence ID" value="NC_007005.1"/>
</dbReference>
<dbReference type="RefSeq" id="YP_235591.1">
    <property type="nucleotide sequence ID" value="NC_007005.1"/>
</dbReference>
<dbReference type="SMR" id="Q4ZTG9"/>
<dbReference type="STRING" id="205918.Psyr_2514"/>
<dbReference type="KEGG" id="psb:Psyr_2514"/>
<dbReference type="PATRIC" id="fig|205918.7.peg.2576"/>
<dbReference type="eggNOG" id="COG1116">
    <property type="taxonomic scope" value="Bacteria"/>
</dbReference>
<dbReference type="HOGENOM" id="CLU_000604_1_22_6"/>
<dbReference type="OrthoDB" id="9802264at2"/>
<dbReference type="Proteomes" id="UP000000426">
    <property type="component" value="Chromosome"/>
</dbReference>
<dbReference type="GO" id="GO:0005886">
    <property type="term" value="C:plasma membrane"/>
    <property type="evidence" value="ECO:0007669"/>
    <property type="project" value="UniProtKB-SubCell"/>
</dbReference>
<dbReference type="GO" id="GO:0005524">
    <property type="term" value="F:ATP binding"/>
    <property type="evidence" value="ECO:0007669"/>
    <property type="project" value="UniProtKB-KW"/>
</dbReference>
<dbReference type="GO" id="GO:0016887">
    <property type="term" value="F:ATP hydrolysis activity"/>
    <property type="evidence" value="ECO:0007669"/>
    <property type="project" value="InterPro"/>
</dbReference>
<dbReference type="Gene3D" id="3.40.50.300">
    <property type="entry name" value="P-loop containing nucleotide triphosphate hydrolases"/>
    <property type="match status" value="1"/>
</dbReference>
<dbReference type="InterPro" id="IPR003593">
    <property type="entry name" value="AAA+_ATPase"/>
</dbReference>
<dbReference type="InterPro" id="IPR003439">
    <property type="entry name" value="ABC_transporter-like_ATP-bd"/>
</dbReference>
<dbReference type="InterPro" id="IPR017871">
    <property type="entry name" value="ABC_transporter-like_CS"/>
</dbReference>
<dbReference type="InterPro" id="IPR050166">
    <property type="entry name" value="ABC_transporter_ATP-bind"/>
</dbReference>
<dbReference type="InterPro" id="IPR027417">
    <property type="entry name" value="P-loop_NTPase"/>
</dbReference>
<dbReference type="PANTHER" id="PTHR42788:SF19">
    <property type="entry name" value="ALIPHATIC SULFONATES IMPORT ATP-BINDING PROTEIN SSUB 2"/>
    <property type="match status" value="1"/>
</dbReference>
<dbReference type="PANTHER" id="PTHR42788">
    <property type="entry name" value="TAURINE IMPORT ATP-BINDING PROTEIN-RELATED"/>
    <property type="match status" value="1"/>
</dbReference>
<dbReference type="Pfam" id="PF00005">
    <property type="entry name" value="ABC_tran"/>
    <property type="match status" value="1"/>
</dbReference>
<dbReference type="SMART" id="SM00382">
    <property type="entry name" value="AAA"/>
    <property type="match status" value="1"/>
</dbReference>
<dbReference type="SUPFAM" id="SSF52540">
    <property type="entry name" value="P-loop containing nucleoside triphosphate hydrolases"/>
    <property type="match status" value="1"/>
</dbReference>
<dbReference type="PROSITE" id="PS00211">
    <property type="entry name" value="ABC_TRANSPORTER_1"/>
    <property type="match status" value="1"/>
</dbReference>
<dbReference type="PROSITE" id="PS50893">
    <property type="entry name" value="ABC_TRANSPORTER_2"/>
    <property type="match status" value="1"/>
</dbReference>
<dbReference type="PROSITE" id="PS51291">
    <property type="entry name" value="SSUB"/>
    <property type="match status" value="1"/>
</dbReference>
<feature type="chain" id="PRO_0000279940" description="Aliphatic sulfonates import ATP-binding protein SsuB 1">
    <location>
        <begin position="1"/>
        <end position="237"/>
    </location>
</feature>
<feature type="domain" description="ABC transporter" evidence="1">
    <location>
        <begin position="5"/>
        <end position="221"/>
    </location>
</feature>
<feature type="binding site" evidence="1">
    <location>
        <begin position="38"/>
        <end position="45"/>
    </location>
    <ligand>
        <name>ATP</name>
        <dbReference type="ChEBI" id="CHEBI:30616"/>
    </ligand>
</feature>
<reference key="1">
    <citation type="journal article" date="2005" name="Proc. Natl. Acad. Sci. U.S.A.">
        <title>Comparison of the complete genome sequences of Pseudomonas syringae pv. syringae B728a and pv. tomato DC3000.</title>
        <authorList>
            <person name="Feil H."/>
            <person name="Feil W.S."/>
            <person name="Chain P."/>
            <person name="Larimer F."/>
            <person name="Dibartolo G."/>
            <person name="Copeland A."/>
            <person name="Lykidis A."/>
            <person name="Trong S."/>
            <person name="Nolan M."/>
            <person name="Goltsman E."/>
            <person name="Thiel J."/>
            <person name="Malfatti S."/>
            <person name="Loper J.E."/>
            <person name="Lapidus A."/>
            <person name="Detter J.C."/>
            <person name="Land M."/>
            <person name="Richardson P.M."/>
            <person name="Kyrpides N.C."/>
            <person name="Ivanova N."/>
            <person name="Lindow S.E."/>
        </authorList>
    </citation>
    <scope>NUCLEOTIDE SEQUENCE [LARGE SCALE GENOMIC DNA]</scope>
    <source>
        <strain>B728a</strain>
    </source>
</reference>
<keyword id="KW-0067">ATP-binding</keyword>
<keyword id="KW-0997">Cell inner membrane</keyword>
<keyword id="KW-1003">Cell membrane</keyword>
<keyword id="KW-0472">Membrane</keyword>
<keyword id="KW-0547">Nucleotide-binding</keyword>
<keyword id="KW-1278">Translocase</keyword>
<keyword id="KW-0813">Transport</keyword>
<comment type="function">
    <text evidence="1">Part of the ABC transporter complex SsuABC involved in aliphatic sulfonates import. Responsible for energy coupling to the transport system.</text>
</comment>
<comment type="catalytic activity">
    <reaction evidence="1">
        <text>ATP + H2O + aliphatic sulfonate-[sulfonate-binding protein]Side 1 = ADP + phosphate + aliphatic sulfonateSide 2 + [sulfonate-binding protein]Side 1.</text>
        <dbReference type="EC" id="7.6.2.14"/>
    </reaction>
</comment>
<comment type="subunit">
    <text evidence="1">The complex is composed of two ATP-binding proteins (SsuB), two transmembrane proteins (SsuC) and a solute-binding protein (SsuA).</text>
</comment>
<comment type="subcellular location">
    <subcellularLocation>
        <location evidence="1">Cell inner membrane</location>
        <topology evidence="1">Peripheral membrane protein</topology>
    </subcellularLocation>
</comment>
<comment type="similarity">
    <text evidence="1">Belongs to the ABC transporter superfamily. Aliphatic sulfonates importer (TC 3.A.1.17.2) family.</text>
</comment>
<sequence>MPESLMDIRVEHKAFAGNTVLHGIDLSLQSGEIVSLLGPSGCGKSTLLRIVAGLEQDFRGSVQRIQGEVAFVFQEPRLMPWLTVAQNIGFSDDDRYDRRWVAQLIEEVGLSGFADALPKALSGGMAQRVAIARGLYSHPAVLLLDEPFSAVDAFTRMKLQDLLLQLAARHAITLLLVTHDVDEALYLSDRVLVMGSRPGTITHQLPVGLQTPRDRRDPLLARLKAQALTELQQAHVI</sequence>
<organism>
    <name type="scientific">Pseudomonas syringae pv. syringae (strain B728a)</name>
    <dbReference type="NCBI Taxonomy" id="205918"/>
    <lineage>
        <taxon>Bacteria</taxon>
        <taxon>Pseudomonadati</taxon>
        <taxon>Pseudomonadota</taxon>
        <taxon>Gammaproteobacteria</taxon>
        <taxon>Pseudomonadales</taxon>
        <taxon>Pseudomonadaceae</taxon>
        <taxon>Pseudomonas</taxon>
        <taxon>Pseudomonas syringae</taxon>
    </lineage>
</organism>
<gene>
    <name evidence="1" type="primary">ssuB1</name>
    <name type="ordered locus">Psyr_2514</name>
</gene>